<protein>
    <recommendedName>
        <fullName evidence="1">Hydroxyethylthiazole kinase</fullName>
        <ecNumber evidence="1">2.7.1.50</ecNumber>
    </recommendedName>
    <alternativeName>
        <fullName evidence="1">4-methyl-5-beta-hydroxyethylthiazole kinase</fullName>
        <shortName evidence="1">TH kinase</shortName>
        <shortName evidence="1">Thz kinase</shortName>
    </alternativeName>
</protein>
<organism>
    <name type="scientific">Leptospira biflexa serovar Patoc (strain Patoc 1 / Ames)</name>
    <dbReference type="NCBI Taxonomy" id="355278"/>
    <lineage>
        <taxon>Bacteria</taxon>
        <taxon>Pseudomonadati</taxon>
        <taxon>Spirochaetota</taxon>
        <taxon>Spirochaetia</taxon>
        <taxon>Leptospirales</taxon>
        <taxon>Leptospiraceae</taxon>
        <taxon>Leptospira</taxon>
    </lineage>
</organism>
<reference key="1">
    <citation type="journal article" date="2008" name="PLoS ONE">
        <title>Genome sequence of the saprophyte Leptospira biflexa provides insights into the evolution of Leptospira and the pathogenesis of leptospirosis.</title>
        <authorList>
            <person name="Picardeau M."/>
            <person name="Bulach D.M."/>
            <person name="Bouchier C."/>
            <person name="Zuerner R.L."/>
            <person name="Zidane N."/>
            <person name="Wilson P.J."/>
            <person name="Creno S."/>
            <person name="Kuczek E.S."/>
            <person name="Bommezzadri S."/>
            <person name="Davis J.C."/>
            <person name="McGrath A."/>
            <person name="Johnson M.J."/>
            <person name="Boursaux-Eude C."/>
            <person name="Seemann T."/>
            <person name="Rouy Z."/>
            <person name="Coppel R.L."/>
            <person name="Rood J.I."/>
            <person name="Lajus A."/>
            <person name="Davies J.K."/>
            <person name="Medigue C."/>
            <person name="Adler B."/>
        </authorList>
    </citation>
    <scope>NUCLEOTIDE SEQUENCE [LARGE SCALE GENOMIC DNA]</scope>
    <source>
        <strain>Patoc 1 / Ames</strain>
    </source>
</reference>
<dbReference type="EC" id="2.7.1.50" evidence="1"/>
<dbReference type="EMBL" id="CP000777">
    <property type="protein sequence ID" value="ABZ95113.1"/>
    <property type="molecule type" value="Genomic_DNA"/>
</dbReference>
<dbReference type="RefSeq" id="WP_012389652.1">
    <property type="nucleotide sequence ID" value="NC_010842.1"/>
</dbReference>
<dbReference type="SMR" id="B0SE82"/>
<dbReference type="KEGG" id="lbf:LBF_2630"/>
<dbReference type="HOGENOM" id="CLU_019943_0_1_12"/>
<dbReference type="UniPathway" id="UPA00060">
    <property type="reaction ID" value="UER00139"/>
</dbReference>
<dbReference type="GO" id="GO:0005524">
    <property type="term" value="F:ATP binding"/>
    <property type="evidence" value="ECO:0007669"/>
    <property type="project" value="UniProtKB-UniRule"/>
</dbReference>
<dbReference type="GO" id="GO:0004417">
    <property type="term" value="F:hydroxyethylthiazole kinase activity"/>
    <property type="evidence" value="ECO:0007669"/>
    <property type="project" value="UniProtKB-UniRule"/>
</dbReference>
<dbReference type="GO" id="GO:0000287">
    <property type="term" value="F:magnesium ion binding"/>
    <property type="evidence" value="ECO:0007669"/>
    <property type="project" value="UniProtKB-UniRule"/>
</dbReference>
<dbReference type="GO" id="GO:0009228">
    <property type="term" value="P:thiamine biosynthetic process"/>
    <property type="evidence" value="ECO:0007669"/>
    <property type="project" value="UniProtKB-KW"/>
</dbReference>
<dbReference type="GO" id="GO:0009229">
    <property type="term" value="P:thiamine diphosphate biosynthetic process"/>
    <property type="evidence" value="ECO:0007669"/>
    <property type="project" value="UniProtKB-UniRule"/>
</dbReference>
<dbReference type="CDD" id="cd01170">
    <property type="entry name" value="THZ_kinase"/>
    <property type="match status" value="1"/>
</dbReference>
<dbReference type="Gene3D" id="3.40.1190.20">
    <property type="match status" value="1"/>
</dbReference>
<dbReference type="HAMAP" id="MF_00228">
    <property type="entry name" value="Thz_kinase"/>
    <property type="match status" value="1"/>
</dbReference>
<dbReference type="InterPro" id="IPR000417">
    <property type="entry name" value="Hyethyz_kinase"/>
</dbReference>
<dbReference type="InterPro" id="IPR029056">
    <property type="entry name" value="Ribokinase-like"/>
</dbReference>
<dbReference type="NCBIfam" id="NF006830">
    <property type="entry name" value="PRK09355.1"/>
    <property type="match status" value="1"/>
</dbReference>
<dbReference type="NCBIfam" id="TIGR00694">
    <property type="entry name" value="thiM"/>
    <property type="match status" value="1"/>
</dbReference>
<dbReference type="Pfam" id="PF02110">
    <property type="entry name" value="HK"/>
    <property type="match status" value="1"/>
</dbReference>
<dbReference type="PIRSF" id="PIRSF000513">
    <property type="entry name" value="Thz_kinase"/>
    <property type="match status" value="1"/>
</dbReference>
<dbReference type="PRINTS" id="PR01099">
    <property type="entry name" value="HYETHTZKNASE"/>
</dbReference>
<dbReference type="SUPFAM" id="SSF53613">
    <property type="entry name" value="Ribokinase-like"/>
    <property type="match status" value="1"/>
</dbReference>
<sequence length="267" mass="27611">MSQHILKNTIEDLELVRSKSPLVHNITNYVVMNNTANALLAIGASPIMAHAIEEVEEMVTICSATVINIGTLSEPWIQSMEKAAKKAVSLGKPLVLDPVGAGASNIRNAAIRRILDAGNPTIVRGNASEILSTLSSSGKTKGVDATDSSESAVETGKSLSKVTGGVVVISGATDFILKGTDMAQISNGDALMTKVTGLGCTASALCGAFAAVQKDQFRAATSAMAVMGIAGEMAKSKTASPGSFQVAFLDALYELNADTIKQKLNAK</sequence>
<keyword id="KW-0067">ATP-binding</keyword>
<keyword id="KW-0418">Kinase</keyword>
<keyword id="KW-0460">Magnesium</keyword>
<keyword id="KW-0479">Metal-binding</keyword>
<keyword id="KW-0547">Nucleotide-binding</keyword>
<keyword id="KW-0784">Thiamine biosynthesis</keyword>
<keyword id="KW-0808">Transferase</keyword>
<proteinExistence type="inferred from homology"/>
<evidence type="ECO:0000255" key="1">
    <source>
        <dbReference type="HAMAP-Rule" id="MF_00228"/>
    </source>
</evidence>
<accession>B0SE82</accession>
<feature type="chain" id="PRO_0000383877" description="Hydroxyethylthiazole kinase">
    <location>
        <begin position="1"/>
        <end position="267"/>
    </location>
</feature>
<feature type="binding site" evidence="1">
    <location>
        <position position="48"/>
    </location>
    <ligand>
        <name>substrate</name>
    </ligand>
</feature>
<feature type="binding site" evidence="1">
    <location>
        <position position="124"/>
    </location>
    <ligand>
        <name>ATP</name>
        <dbReference type="ChEBI" id="CHEBI:30616"/>
    </ligand>
</feature>
<feature type="binding site" evidence="1">
    <location>
        <position position="170"/>
    </location>
    <ligand>
        <name>ATP</name>
        <dbReference type="ChEBI" id="CHEBI:30616"/>
    </ligand>
</feature>
<feature type="binding site" evidence="1">
    <location>
        <position position="197"/>
    </location>
    <ligand>
        <name>substrate</name>
    </ligand>
</feature>
<gene>
    <name evidence="1" type="primary">thiM</name>
    <name type="ordered locus">LBF_2630</name>
</gene>
<name>THIM_LEPBA</name>
<comment type="function">
    <text evidence="1">Catalyzes the phosphorylation of the hydroxyl group of 4-methyl-5-beta-hydroxyethylthiazole (THZ).</text>
</comment>
<comment type="catalytic activity">
    <reaction evidence="1">
        <text>5-(2-hydroxyethyl)-4-methylthiazole + ATP = 4-methyl-5-(2-phosphooxyethyl)-thiazole + ADP + H(+)</text>
        <dbReference type="Rhea" id="RHEA:24212"/>
        <dbReference type="ChEBI" id="CHEBI:15378"/>
        <dbReference type="ChEBI" id="CHEBI:17957"/>
        <dbReference type="ChEBI" id="CHEBI:30616"/>
        <dbReference type="ChEBI" id="CHEBI:58296"/>
        <dbReference type="ChEBI" id="CHEBI:456216"/>
        <dbReference type="EC" id="2.7.1.50"/>
    </reaction>
</comment>
<comment type="cofactor">
    <cofactor evidence="1">
        <name>Mg(2+)</name>
        <dbReference type="ChEBI" id="CHEBI:18420"/>
    </cofactor>
</comment>
<comment type="pathway">
    <text evidence="1">Cofactor biosynthesis; thiamine diphosphate biosynthesis; 4-methyl-5-(2-phosphoethyl)-thiazole from 5-(2-hydroxyethyl)-4-methylthiazole: step 1/1.</text>
</comment>
<comment type="similarity">
    <text evidence="1">Belongs to the Thz kinase family.</text>
</comment>